<organism>
    <name type="scientific">Campylobacter hominis (strain ATCC BAA-381 / DSM 21671 / CCUG 45161 / LMG 19568 / NCTC 13146 / CH001A)</name>
    <dbReference type="NCBI Taxonomy" id="360107"/>
    <lineage>
        <taxon>Bacteria</taxon>
        <taxon>Pseudomonadati</taxon>
        <taxon>Campylobacterota</taxon>
        <taxon>Epsilonproteobacteria</taxon>
        <taxon>Campylobacterales</taxon>
        <taxon>Campylobacteraceae</taxon>
        <taxon>Campylobacter</taxon>
    </lineage>
</organism>
<protein>
    <recommendedName>
        <fullName evidence="1">GTP cyclohydrolase-2</fullName>
        <ecNumber evidence="1">3.5.4.25</ecNumber>
    </recommendedName>
    <alternativeName>
        <fullName evidence="1">GTP cyclohydrolase II</fullName>
    </alternativeName>
</protein>
<keyword id="KW-0342">GTP-binding</keyword>
<keyword id="KW-0378">Hydrolase</keyword>
<keyword id="KW-0479">Metal-binding</keyword>
<keyword id="KW-0547">Nucleotide-binding</keyword>
<keyword id="KW-1185">Reference proteome</keyword>
<keyword id="KW-0686">Riboflavin biosynthesis</keyword>
<keyword id="KW-0862">Zinc</keyword>
<feature type="chain" id="PRO_1000040558" description="GTP cyclohydrolase-2">
    <location>
        <begin position="1"/>
        <end position="193"/>
    </location>
</feature>
<feature type="active site" description="Proton acceptor" evidence="1">
    <location>
        <position position="121"/>
    </location>
</feature>
<feature type="active site" description="Nucleophile" evidence="1">
    <location>
        <position position="123"/>
    </location>
</feature>
<feature type="binding site" evidence="1">
    <location>
        <begin position="45"/>
        <end position="49"/>
    </location>
    <ligand>
        <name>GTP</name>
        <dbReference type="ChEBI" id="CHEBI:37565"/>
    </ligand>
</feature>
<feature type="binding site" evidence="1">
    <location>
        <position position="50"/>
    </location>
    <ligand>
        <name>Zn(2+)</name>
        <dbReference type="ChEBI" id="CHEBI:29105"/>
        <note>catalytic</note>
    </ligand>
</feature>
<feature type="binding site" evidence="1">
    <location>
        <position position="61"/>
    </location>
    <ligand>
        <name>Zn(2+)</name>
        <dbReference type="ChEBI" id="CHEBI:29105"/>
        <note>catalytic</note>
    </ligand>
</feature>
<feature type="binding site" evidence="1">
    <location>
        <position position="63"/>
    </location>
    <ligand>
        <name>Zn(2+)</name>
        <dbReference type="ChEBI" id="CHEBI:29105"/>
        <note>catalytic</note>
    </ligand>
</feature>
<feature type="binding site" evidence="1">
    <location>
        <position position="66"/>
    </location>
    <ligand>
        <name>GTP</name>
        <dbReference type="ChEBI" id="CHEBI:37565"/>
    </ligand>
</feature>
<feature type="binding site" evidence="1">
    <location>
        <begin position="87"/>
        <end position="89"/>
    </location>
    <ligand>
        <name>GTP</name>
        <dbReference type="ChEBI" id="CHEBI:37565"/>
    </ligand>
</feature>
<feature type="binding site" evidence="1">
    <location>
        <position position="109"/>
    </location>
    <ligand>
        <name>GTP</name>
        <dbReference type="ChEBI" id="CHEBI:37565"/>
    </ligand>
</feature>
<feature type="binding site" evidence="1">
    <location>
        <position position="144"/>
    </location>
    <ligand>
        <name>GTP</name>
        <dbReference type="ChEBI" id="CHEBI:37565"/>
    </ligand>
</feature>
<feature type="binding site" evidence="1">
    <location>
        <position position="149"/>
    </location>
    <ligand>
        <name>GTP</name>
        <dbReference type="ChEBI" id="CHEBI:37565"/>
    </ligand>
</feature>
<gene>
    <name evidence="1" type="primary">ribA</name>
    <name type="ordered locus">CHAB381_1699</name>
</gene>
<proteinExistence type="inferred from homology"/>
<dbReference type="EC" id="3.5.4.25" evidence="1"/>
<dbReference type="EMBL" id="CP000776">
    <property type="protein sequence ID" value="ABS52344.1"/>
    <property type="molecule type" value="Genomic_DNA"/>
</dbReference>
<dbReference type="RefSeq" id="WP_012109517.1">
    <property type="nucleotide sequence ID" value="NC_009714.1"/>
</dbReference>
<dbReference type="SMR" id="A7I3X0"/>
<dbReference type="STRING" id="360107.CHAB381_1699"/>
<dbReference type="KEGG" id="cha:CHAB381_1699"/>
<dbReference type="eggNOG" id="COG0807">
    <property type="taxonomic scope" value="Bacteria"/>
</dbReference>
<dbReference type="HOGENOM" id="CLU_020273_2_1_7"/>
<dbReference type="OrthoDB" id="9793111at2"/>
<dbReference type="UniPathway" id="UPA00275">
    <property type="reaction ID" value="UER00400"/>
</dbReference>
<dbReference type="Proteomes" id="UP000002407">
    <property type="component" value="Chromosome"/>
</dbReference>
<dbReference type="GO" id="GO:0005829">
    <property type="term" value="C:cytosol"/>
    <property type="evidence" value="ECO:0007669"/>
    <property type="project" value="TreeGrafter"/>
</dbReference>
<dbReference type="GO" id="GO:0005525">
    <property type="term" value="F:GTP binding"/>
    <property type="evidence" value="ECO:0007669"/>
    <property type="project" value="UniProtKB-KW"/>
</dbReference>
<dbReference type="GO" id="GO:0003935">
    <property type="term" value="F:GTP cyclohydrolase II activity"/>
    <property type="evidence" value="ECO:0007669"/>
    <property type="project" value="UniProtKB-UniRule"/>
</dbReference>
<dbReference type="GO" id="GO:0008270">
    <property type="term" value="F:zinc ion binding"/>
    <property type="evidence" value="ECO:0007669"/>
    <property type="project" value="UniProtKB-UniRule"/>
</dbReference>
<dbReference type="GO" id="GO:0009231">
    <property type="term" value="P:riboflavin biosynthetic process"/>
    <property type="evidence" value="ECO:0007669"/>
    <property type="project" value="UniProtKB-UniRule"/>
</dbReference>
<dbReference type="CDD" id="cd00641">
    <property type="entry name" value="GTP_cyclohydro2"/>
    <property type="match status" value="1"/>
</dbReference>
<dbReference type="FunFam" id="3.40.50.10990:FF:000002">
    <property type="entry name" value="GTP cyclohydrolase-2"/>
    <property type="match status" value="1"/>
</dbReference>
<dbReference type="Gene3D" id="3.40.50.10990">
    <property type="entry name" value="GTP cyclohydrolase II"/>
    <property type="match status" value="1"/>
</dbReference>
<dbReference type="HAMAP" id="MF_00179">
    <property type="entry name" value="RibA"/>
    <property type="match status" value="1"/>
</dbReference>
<dbReference type="InterPro" id="IPR032677">
    <property type="entry name" value="GTP_cyclohydro_II"/>
</dbReference>
<dbReference type="InterPro" id="IPR000926">
    <property type="entry name" value="RibA"/>
</dbReference>
<dbReference type="InterPro" id="IPR036144">
    <property type="entry name" value="RibA-like_sf"/>
</dbReference>
<dbReference type="NCBIfam" id="NF001591">
    <property type="entry name" value="PRK00393.1"/>
    <property type="match status" value="1"/>
</dbReference>
<dbReference type="NCBIfam" id="TIGR00505">
    <property type="entry name" value="ribA"/>
    <property type="match status" value="1"/>
</dbReference>
<dbReference type="PANTHER" id="PTHR21327:SF18">
    <property type="entry name" value="3,4-DIHYDROXY-2-BUTANONE 4-PHOSPHATE SYNTHASE"/>
    <property type="match status" value="1"/>
</dbReference>
<dbReference type="PANTHER" id="PTHR21327">
    <property type="entry name" value="GTP CYCLOHYDROLASE II-RELATED"/>
    <property type="match status" value="1"/>
</dbReference>
<dbReference type="Pfam" id="PF00925">
    <property type="entry name" value="GTP_cyclohydro2"/>
    <property type="match status" value="1"/>
</dbReference>
<dbReference type="SUPFAM" id="SSF142695">
    <property type="entry name" value="RibA-like"/>
    <property type="match status" value="1"/>
</dbReference>
<accession>A7I3X0</accession>
<evidence type="ECO:0000255" key="1">
    <source>
        <dbReference type="HAMAP-Rule" id="MF_00179"/>
    </source>
</evidence>
<reference key="1">
    <citation type="submission" date="2007-07" db="EMBL/GenBank/DDBJ databases">
        <title>Complete genome sequence of Campylobacter hominis ATCC BAA-381, a commensal isolated from the human gastrointestinal tract.</title>
        <authorList>
            <person name="Fouts D.E."/>
            <person name="Mongodin E.F."/>
            <person name="Puiu D."/>
            <person name="Sebastian Y."/>
            <person name="Miller W.G."/>
            <person name="Mandrell R.E."/>
            <person name="Nelson K.E."/>
        </authorList>
    </citation>
    <scope>NUCLEOTIDE SEQUENCE [LARGE SCALE GENOMIC DNA]</scope>
    <source>
        <strain>ATCC BAA-381 / DSM 21671 / CCUG 45161 / LMG 19568 / NCTC 13146 / CH001A</strain>
    </source>
</reference>
<sequence length="193" mass="22312">MNIEISNVAKLPSRFGMFKVQAFKEDEKEHLVIIKEPYKEPVNIRIHSECLTGDAIGSLKCDCRDQLEESLKFIEKNGGMVIYLRQEGRNIGLFNKINAYNLQDKGLDTIEANHQLGFKTDERTYEIVDFILKYYKIKSINLLTNNPKKLMGLHNVKVAARVPIIIKPNKFNEKYLQTKKNEMGHLLDDNKKA</sequence>
<name>RIBA_CAMHC</name>
<comment type="function">
    <text evidence="1">Catalyzes the conversion of GTP to 2,5-diamino-6-ribosylamino-4(3H)-pyrimidinone 5'-phosphate (DARP), formate and pyrophosphate.</text>
</comment>
<comment type="catalytic activity">
    <reaction evidence="1">
        <text>GTP + 4 H2O = 2,5-diamino-6-hydroxy-4-(5-phosphoribosylamino)-pyrimidine + formate + 2 phosphate + 3 H(+)</text>
        <dbReference type="Rhea" id="RHEA:23704"/>
        <dbReference type="ChEBI" id="CHEBI:15377"/>
        <dbReference type="ChEBI" id="CHEBI:15378"/>
        <dbReference type="ChEBI" id="CHEBI:15740"/>
        <dbReference type="ChEBI" id="CHEBI:37565"/>
        <dbReference type="ChEBI" id="CHEBI:43474"/>
        <dbReference type="ChEBI" id="CHEBI:58614"/>
        <dbReference type="EC" id="3.5.4.25"/>
    </reaction>
</comment>
<comment type="cofactor">
    <cofactor evidence="1">
        <name>Zn(2+)</name>
        <dbReference type="ChEBI" id="CHEBI:29105"/>
    </cofactor>
    <text evidence="1">Binds 1 zinc ion per subunit.</text>
</comment>
<comment type="pathway">
    <text evidence="1">Cofactor biosynthesis; riboflavin biosynthesis; 5-amino-6-(D-ribitylamino)uracil from GTP: step 1/4.</text>
</comment>
<comment type="similarity">
    <text evidence="1">Belongs to the GTP cyclohydrolase II family.</text>
</comment>